<gene>
    <name type="primary">pleD</name>
    <name type="ordered locus">CC_2462</name>
</gene>
<keyword id="KW-0131">Cell cycle</keyword>
<keyword id="KW-0963">Cytoplasm</keyword>
<keyword id="KW-0221">Differentiation</keyword>
<keyword id="KW-0342">GTP-binding</keyword>
<keyword id="KW-0460">Magnesium</keyword>
<keyword id="KW-0479">Metal-binding</keyword>
<keyword id="KW-0547">Nucleotide-binding</keyword>
<keyword id="KW-0597">Phosphoprotein</keyword>
<keyword id="KW-1185">Reference proteome</keyword>
<keyword id="KW-0677">Repeat</keyword>
<keyword id="KW-0807">Transducer</keyword>
<keyword id="KW-0808">Transferase</keyword>
<keyword id="KW-0902">Two-component regulatory system</keyword>
<reference key="1">
    <citation type="journal article" date="1995" name="J. Bacteriol.">
        <title>Identification of a novel response regulator required for the swarmer-to-stalked-cell transition in Caulobacter crescentus.</title>
        <authorList>
            <person name="Hecht G.B."/>
            <person name="Newton A."/>
        </authorList>
    </citation>
    <scope>NUCLEOTIDE SEQUENCE [GENOMIC DNA]</scope>
    <source>
        <strain>ATCC 19089 / CIP 103742 / CB 15</strain>
    </source>
</reference>
<reference key="2">
    <citation type="journal article" date="2001" name="Proc. Natl. Acad. Sci. U.S.A.">
        <title>Complete genome sequence of Caulobacter crescentus.</title>
        <authorList>
            <person name="Nierman W.C."/>
            <person name="Feldblyum T.V."/>
            <person name="Laub M.T."/>
            <person name="Paulsen I.T."/>
            <person name="Nelson K.E."/>
            <person name="Eisen J.A."/>
            <person name="Heidelberg J.F."/>
            <person name="Alley M.R.K."/>
            <person name="Ohta N."/>
            <person name="Maddock J.R."/>
            <person name="Potocka I."/>
            <person name="Nelson W.C."/>
            <person name="Newton A."/>
            <person name="Stephens C."/>
            <person name="Phadke N.D."/>
            <person name="Ely B."/>
            <person name="DeBoy R.T."/>
            <person name="Dodson R.J."/>
            <person name="Durkin A.S."/>
            <person name="Gwinn M.L."/>
            <person name="Haft D.H."/>
            <person name="Kolonay J.F."/>
            <person name="Smit J."/>
            <person name="Craven M.B."/>
            <person name="Khouri H.M."/>
            <person name="Shetty J."/>
            <person name="Berry K.J."/>
            <person name="Utterback T.R."/>
            <person name="Tran K."/>
            <person name="Wolf A.M."/>
            <person name="Vamathevan J.J."/>
            <person name="Ermolaeva M.D."/>
            <person name="White O."/>
            <person name="Salzberg S.L."/>
            <person name="Venter J.C."/>
            <person name="Shapiro L."/>
            <person name="Fraser C.M."/>
        </authorList>
    </citation>
    <scope>NUCLEOTIDE SEQUENCE [LARGE SCALE GENOMIC DNA]</scope>
    <source>
        <strain>ATCC 19089 / CIP 103742 / CB 15</strain>
    </source>
</reference>
<protein>
    <recommendedName>
        <fullName>Response regulator PleD</fullName>
    </recommendedName>
    <alternativeName>
        <fullName>Stalked cell differentiation-controlling protein</fullName>
    </alternativeName>
    <domain>
        <recommendedName>
            <fullName>Diguanylate cyclase</fullName>
            <shortName>DGC</shortName>
            <ecNumber>2.7.7.65</ecNumber>
        </recommendedName>
        <alternativeName>
            <fullName>Diguanylate kinase</fullName>
        </alternativeName>
    </domain>
</protein>
<sequence>MSARILVVDDIEANVRLLEAKLTAEYYEVSTAMDGPTALAMAARDLPDIILLDVMMPGMDGFTVCRKLKDDPTTRHIPVVLITALDGRGDRIQGLESGASDFLTKPIDDVMLFARVRSLTRFKLVIDELRQREASGRRMGVIAGAAARLDGLGGRVLIVDDNERQAQRVAAELGVEHRPVIESDPEKAKISAGGPVDLVIVNAAAKNFDGLRFTAALRSEERTRQLPVLAMVDPDDRGRMVKALEIGVNDILSRPIDPQELSARVKTQIQRKRYTDYLRNNLDHSLELAVTDQLTGLHNRRYMTGQLDSLVKRATLGGDPVSALLIDIDFFKKINDTFGHDIGDEVLREFALRLASNVRAIDLPCRYGGEEFVVIMPDTALADALRIAERIRMHVSGSPFTVAHGREMLNVTISIGVSATAGEGDTPEALLKRADEGVYQAKASGRNAVVGKAA</sequence>
<feature type="chain" id="PRO_0000081206" description="Response regulator PleD">
    <location>
        <begin position="1"/>
        <end position="454"/>
    </location>
</feature>
<feature type="domain" description="Response regulatory 1" evidence="4">
    <location>
        <begin position="4"/>
        <end position="120"/>
    </location>
</feature>
<feature type="domain" description="Response regulatory 2" evidence="4">
    <location>
        <begin position="155"/>
        <end position="269"/>
    </location>
</feature>
<feature type="domain" description="GGDEF" evidence="3">
    <location>
        <begin position="319"/>
        <end position="454"/>
    </location>
</feature>
<feature type="active site" description="Proton acceptor" evidence="2">
    <location>
        <position position="370"/>
    </location>
</feature>
<feature type="binding site" evidence="1">
    <location>
        <position position="9"/>
    </location>
    <ligand>
        <name>Mg(2+)</name>
        <dbReference type="ChEBI" id="CHEBI:18420"/>
    </ligand>
</feature>
<feature type="binding site" evidence="1">
    <location>
        <position position="10"/>
    </location>
    <ligand>
        <name>Mg(2+)</name>
        <dbReference type="ChEBI" id="CHEBI:18420"/>
    </ligand>
</feature>
<feature type="binding site" evidence="1">
    <location>
        <position position="53"/>
    </location>
    <ligand>
        <name>Mg(2+)</name>
        <dbReference type="ChEBI" id="CHEBI:18420"/>
    </ligand>
</feature>
<feature type="binding site" evidence="1">
    <location>
        <position position="55"/>
    </location>
    <ligand>
        <name>Mg(2+)</name>
        <dbReference type="ChEBI" id="CHEBI:18420"/>
    </ligand>
</feature>
<feature type="binding site" evidence="1">
    <location>
        <position position="335"/>
    </location>
    <ligand>
        <name>substrate</name>
    </ligand>
</feature>
<feature type="binding site" evidence="1">
    <location>
        <position position="344"/>
    </location>
    <ligand>
        <name>substrate</name>
    </ligand>
</feature>
<feature type="site" description="Allosteric product binding" evidence="1">
    <location>
        <position position="178"/>
    </location>
</feature>
<feature type="site" description="Transition state stabilizer" evidence="2">
    <location>
        <position position="332"/>
    </location>
</feature>
<feature type="site" description="Allosteric product phosphate group binding" evidence="1">
    <location>
        <position position="359"/>
    </location>
</feature>
<feature type="site" description="Allosteric product binding" evidence="1">
    <location>
        <position position="362"/>
    </location>
</feature>
<feature type="site" description="Allosteric product binding" evidence="1">
    <location>
        <position position="390"/>
    </location>
</feature>
<feature type="modified residue" description="4-aspartylphosphate" evidence="4">
    <location>
        <position position="53"/>
    </location>
</feature>
<feature type="sequence conflict" description="In Ref. 1; AAA87378." evidence="5" ref="1">
    <original>DLPD</original>
    <variation>ICPT</variation>
    <location>
        <begin position="45"/>
        <end position="48"/>
    </location>
</feature>
<feature type="sequence conflict" description="In Ref. 1; AAA87378." evidence="5" ref="1">
    <original>Y</original>
    <variation>C</variation>
    <location>
        <position position="274"/>
    </location>
</feature>
<name>PLED_CAUVC</name>
<accession>Q9A5I5</accession>
<accession>Q46020</accession>
<evidence type="ECO:0000250" key="1"/>
<evidence type="ECO:0000255" key="2"/>
<evidence type="ECO:0000255" key="3">
    <source>
        <dbReference type="PROSITE-ProRule" id="PRU00095"/>
    </source>
</evidence>
<evidence type="ECO:0000255" key="4">
    <source>
        <dbReference type="PROSITE-ProRule" id="PRU00169"/>
    </source>
</evidence>
<evidence type="ECO:0000305" key="5"/>
<organism>
    <name type="scientific">Caulobacter vibrioides (strain ATCC 19089 / CIP 103742 / CB 15)</name>
    <name type="common">Caulobacter crescentus</name>
    <dbReference type="NCBI Taxonomy" id="190650"/>
    <lineage>
        <taxon>Bacteria</taxon>
        <taxon>Pseudomonadati</taxon>
        <taxon>Pseudomonadota</taxon>
        <taxon>Alphaproteobacteria</taxon>
        <taxon>Caulobacterales</taxon>
        <taxon>Caulobacteraceae</taxon>
        <taxon>Caulobacter</taxon>
    </lineage>
</organism>
<comment type="function">
    <text evidence="1">Response regulator that is part of a signal transduction pathway controlling cell differentiation in the swarmer-to-stalked cell transition.</text>
</comment>
<comment type="function">
    <text evidence="1">Catalyzes the condensation of two GTP molecules to the cyclic dinucleotide di-GMP (c-di-GMP), which acts as a secondary messenger.</text>
</comment>
<comment type="catalytic activity">
    <reaction>
        <text>2 GTP = 3',3'-c-di-GMP + 2 diphosphate</text>
        <dbReference type="Rhea" id="RHEA:24898"/>
        <dbReference type="ChEBI" id="CHEBI:33019"/>
        <dbReference type="ChEBI" id="CHEBI:37565"/>
        <dbReference type="ChEBI" id="CHEBI:58805"/>
        <dbReference type="EC" id="2.7.7.65"/>
    </reaction>
</comment>
<comment type="activity regulation">
    <text evidence="1">Allosterically inhibited by the product c-di-GMP.</text>
</comment>
<comment type="pathway">
    <text>Purine metabolism; 3',5'-cyclic di-GMP biosynthesis.</text>
</comment>
<comment type="subunit">
    <text evidence="1">Homodimer. Inactive monomer in solution (By similarity).</text>
</comment>
<comment type="interaction">
    <interactant intactId="EBI-1784732">
        <id>Q9A5I5</id>
    </interactant>
    <interactant intactId="EBI-1785038">
        <id>Q03228</id>
        <label>divJ</label>
    </interactant>
    <organismsDiffer>false</organismsDiffer>
    <experiments>3</experiments>
</comment>
<comment type="interaction">
    <interactant intactId="EBI-1784732">
        <id>Q9A5I5</id>
    </interactant>
    <interactant intactId="EBI-1784742">
        <id>P37894</id>
        <label>pleC</label>
    </interactant>
    <organismsDiffer>false</organismsDiffer>
    <experiments>4</experiments>
</comment>
<comment type="interaction">
    <interactant intactId="EBI-1784732">
        <id>Q9A5I5</id>
    </interactant>
    <interactant intactId="EBI-1784732">
        <id>Q9A5I5</id>
        <label>pleD</label>
    </interactant>
    <organismsDiffer>false</organismsDiffer>
    <experiments>4</experiments>
</comment>
<comment type="subcellular location">
    <subcellularLocation>
        <location evidence="1">Cytoplasm</location>
    </subcellularLocation>
    <text>Phosphorylated PleD localizes to the differentiating pole.</text>
</comment>
<comment type="domain">
    <text evidence="1 5">Activated by phosphorylation at the first response regulatory domain, which induces dimerization mediated by the two response regulatory domains and allows the two substrate-binding sites to approach each other and the condensation reaction to occur (Probable). The diguanylate cyclase activity is harbored by the GGDEF domain (By similarity).</text>
</comment>
<comment type="PTM">
    <text evidence="1">Phosphorylated by PleC and DivJ. Phosphorylation stimulates cyclase activity (By similarity).</text>
</comment>
<proteinExistence type="evidence at protein level"/>
<dbReference type="EC" id="2.7.7.65"/>
<dbReference type="EMBL" id="L42554">
    <property type="protein sequence ID" value="AAA87378.1"/>
    <property type="molecule type" value="Genomic_DNA"/>
</dbReference>
<dbReference type="EMBL" id="AE005673">
    <property type="protein sequence ID" value="AAK24433.1"/>
    <property type="molecule type" value="Genomic_DNA"/>
</dbReference>
<dbReference type="PIR" id="E87554">
    <property type="entry name" value="E87554"/>
</dbReference>
<dbReference type="RefSeq" id="NP_421265.1">
    <property type="nucleotide sequence ID" value="NC_002696.2"/>
</dbReference>
<dbReference type="RefSeq" id="WP_010920320.1">
    <property type="nucleotide sequence ID" value="NC_002696.2"/>
</dbReference>
<dbReference type="SMR" id="Q9A5I5"/>
<dbReference type="DIP" id="DIP-29503N"/>
<dbReference type="IntAct" id="Q9A5I5">
    <property type="interactions" value="2"/>
</dbReference>
<dbReference type="STRING" id="190650.CC_2462"/>
<dbReference type="DrugBank" id="DB01972">
    <property type="generic name" value="Guanosine-5'-Monophosphate"/>
</dbReference>
<dbReference type="EnsemblBacteria" id="AAK24433">
    <property type="protein sequence ID" value="AAK24433"/>
    <property type="gene ID" value="CC_2462"/>
</dbReference>
<dbReference type="KEGG" id="ccr:CC_2462"/>
<dbReference type="PATRIC" id="fig|190650.5.peg.2479"/>
<dbReference type="eggNOG" id="COG0745">
    <property type="taxonomic scope" value="Bacteria"/>
</dbReference>
<dbReference type="eggNOG" id="COG3706">
    <property type="taxonomic scope" value="Bacteria"/>
</dbReference>
<dbReference type="HOGENOM" id="CLU_000445_11_28_5"/>
<dbReference type="BioCyc" id="CAULO:CC2462-MONOMER"/>
<dbReference type="BRENDA" id="2.7.7.65">
    <property type="organism ID" value="1218"/>
</dbReference>
<dbReference type="UniPathway" id="UPA00599"/>
<dbReference type="Proteomes" id="UP000001816">
    <property type="component" value="Chromosome"/>
</dbReference>
<dbReference type="GO" id="GO:0005737">
    <property type="term" value="C:cytoplasm"/>
    <property type="evidence" value="ECO:0007669"/>
    <property type="project" value="UniProtKB-SubCell"/>
</dbReference>
<dbReference type="GO" id="GO:0005886">
    <property type="term" value="C:plasma membrane"/>
    <property type="evidence" value="ECO:0007669"/>
    <property type="project" value="TreeGrafter"/>
</dbReference>
<dbReference type="GO" id="GO:0052621">
    <property type="term" value="F:diguanylate cyclase activity"/>
    <property type="evidence" value="ECO:0007669"/>
    <property type="project" value="UniProtKB-EC"/>
</dbReference>
<dbReference type="GO" id="GO:0005525">
    <property type="term" value="F:GTP binding"/>
    <property type="evidence" value="ECO:0007669"/>
    <property type="project" value="UniProtKB-KW"/>
</dbReference>
<dbReference type="GO" id="GO:0042802">
    <property type="term" value="F:identical protein binding"/>
    <property type="evidence" value="ECO:0000353"/>
    <property type="project" value="IntAct"/>
</dbReference>
<dbReference type="GO" id="GO:0046872">
    <property type="term" value="F:metal ion binding"/>
    <property type="evidence" value="ECO:0007669"/>
    <property type="project" value="UniProtKB-KW"/>
</dbReference>
<dbReference type="GO" id="GO:0043709">
    <property type="term" value="P:cell adhesion involved in single-species biofilm formation"/>
    <property type="evidence" value="ECO:0007669"/>
    <property type="project" value="TreeGrafter"/>
</dbReference>
<dbReference type="GO" id="GO:0030154">
    <property type="term" value="P:cell differentiation"/>
    <property type="evidence" value="ECO:0007669"/>
    <property type="project" value="UniProtKB-KW"/>
</dbReference>
<dbReference type="GO" id="GO:1902201">
    <property type="term" value="P:negative regulation of bacterial-type flagellum-dependent cell motility"/>
    <property type="evidence" value="ECO:0007669"/>
    <property type="project" value="TreeGrafter"/>
</dbReference>
<dbReference type="GO" id="GO:0000160">
    <property type="term" value="P:phosphorelay signal transduction system"/>
    <property type="evidence" value="ECO:0000314"/>
    <property type="project" value="CACAO"/>
</dbReference>
<dbReference type="CDD" id="cd01949">
    <property type="entry name" value="GGDEF"/>
    <property type="match status" value="1"/>
</dbReference>
<dbReference type="CDD" id="cd17538">
    <property type="entry name" value="REC_D1_PleD-like"/>
    <property type="match status" value="1"/>
</dbReference>
<dbReference type="FunFam" id="3.30.70.270:FF:000167">
    <property type="entry name" value="Response regulator PleD"/>
    <property type="match status" value="1"/>
</dbReference>
<dbReference type="FunFam" id="3.40.50.2300:FF:000574">
    <property type="entry name" value="Response regulator PleD"/>
    <property type="match status" value="1"/>
</dbReference>
<dbReference type="Gene3D" id="3.30.70.270">
    <property type="match status" value="1"/>
</dbReference>
<dbReference type="Gene3D" id="3.40.50.2300">
    <property type="match status" value="1"/>
</dbReference>
<dbReference type="InterPro" id="IPR011006">
    <property type="entry name" value="CheY-like_superfamily"/>
</dbReference>
<dbReference type="InterPro" id="IPR050469">
    <property type="entry name" value="Diguanylate_Cyclase"/>
</dbReference>
<dbReference type="InterPro" id="IPR000160">
    <property type="entry name" value="GGDEF_dom"/>
</dbReference>
<dbReference type="InterPro" id="IPR029787">
    <property type="entry name" value="Nucleotide_cyclase"/>
</dbReference>
<dbReference type="InterPro" id="IPR043128">
    <property type="entry name" value="Rev_trsase/Diguanyl_cyclase"/>
</dbReference>
<dbReference type="InterPro" id="IPR001789">
    <property type="entry name" value="Sig_transdc_resp-reg_receiver"/>
</dbReference>
<dbReference type="NCBIfam" id="TIGR00254">
    <property type="entry name" value="GGDEF"/>
    <property type="match status" value="1"/>
</dbReference>
<dbReference type="NCBIfam" id="NF007135">
    <property type="entry name" value="PRK09581.1"/>
    <property type="match status" value="1"/>
</dbReference>
<dbReference type="PANTHER" id="PTHR45138:SF9">
    <property type="entry name" value="DIGUANYLATE CYCLASE DGCM-RELATED"/>
    <property type="match status" value="1"/>
</dbReference>
<dbReference type="PANTHER" id="PTHR45138">
    <property type="entry name" value="REGULATORY COMPONENTS OF SENSORY TRANSDUCTION SYSTEM"/>
    <property type="match status" value="1"/>
</dbReference>
<dbReference type="Pfam" id="PF00990">
    <property type="entry name" value="GGDEF"/>
    <property type="match status" value="1"/>
</dbReference>
<dbReference type="Pfam" id="PF00072">
    <property type="entry name" value="Response_reg"/>
    <property type="match status" value="2"/>
</dbReference>
<dbReference type="SMART" id="SM00267">
    <property type="entry name" value="GGDEF"/>
    <property type="match status" value="1"/>
</dbReference>
<dbReference type="SMART" id="SM00448">
    <property type="entry name" value="REC"/>
    <property type="match status" value="2"/>
</dbReference>
<dbReference type="SUPFAM" id="SSF52172">
    <property type="entry name" value="CheY-like"/>
    <property type="match status" value="2"/>
</dbReference>
<dbReference type="SUPFAM" id="SSF55073">
    <property type="entry name" value="Nucleotide cyclase"/>
    <property type="match status" value="1"/>
</dbReference>
<dbReference type="PROSITE" id="PS50887">
    <property type="entry name" value="GGDEF"/>
    <property type="match status" value="1"/>
</dbReference>
<dbReference type="PROSITE" id="PS50110">
    <property type="entry name" value="RESPONSE_REGULATORY"/>
    <property type="match status" value="2"/>
</dbReference>